<keyword id="KW-1185">Reference proteome</keyword>
<keyword id="KW-0808">Transferase</keyword>
<dbReference type="EC" id="2.5.1.-" evidence="6"/>
<dbReference type="EMBL" id="DS989827">
    <property type="protein sequence ID" value="EFR03595.1"/>
    <property type="molecule type" value="Genomic_DNA"/>
</dbReference>
<dbReference type="RefSeq" id="XP_003170603.1">
    <property type="nucleotide sequence ID" value="XM_003170555.1"/>
</dbReference>
<dbReference type="SMR" id="E4V2N3"/>
<dbReference type="STRING" id="535722.E4V2N3"/>
<dbReference type="GeneID" id="10025842"/>
<dbReference type="VEuPathDB" id="FungiDB:MGYG_06589"/>
<dbReference type="eggNOG" id="ENOG502S2XP">
    <property type="taxonomic scope" value="Eukaryota"/>
</dbReference>
<dbReference type="HOGENOM" id="CLU_037431_2_0_1"/>
<dbReference type="InParanoid" id="E4V2N3"/>
<dbReference type="OMA" id="TGIDCCK"/>
<dbReference type="OrthoDB" id="3354387at2759"/>
<dbReference type="Proteomes" id="UP000002669">
    <property type="component" value="Unassembled WGS sequence"/>
</dbReference>
<dbReference type="GO" id="GO:0004659">
    <property type="term" value="F:prenyltransferase activity"/>
    <property type="evidence" value="ECO:0007669"/>
    <property type="project" value="TreeGrafter"/>
</dbReference>
<dbReference type="GO" id="GO:0009820">
    <property type="term" value="P:alkaloid metabolic process"/>
    <property type="evidence" value="ECO:0007669"/>
    <property type="project" value="InterPro"/>
</dbReference>
<dbReference type="CDD" id="cd13929">
    <property type="entry name" value="PT-DMATS_CymD"/>
    <property type="match status" value="1"/>
</dbReference>
<dbReference type="InterPro" id="IPR033964">
    <property type="entry name" value="Aro_prenylTrfase"/>
</dbReference>
<dbReference type="InterPro" id="IPR017795">
    <property type="entry name" value="Aro_prenylTrfase_DMATS"/>
</dbReference>
<dbReference type="NCBIfam" id="TIGR03429">
    <property type="entry name" value="arom_pren_DMATS"/>
    <property type="match status" value="1"/>
</dbReference>
<dbReference type="PANTHER" id="PTHR40627">
    <property type="entry name" value="INDOLE PRENYLTRANSFERASE TDIB-RELATED"/>
    <property type="match status" value="1"/>
</dbReference>
<dbReference type="PANTHER" id="PTHR40627:SF4">
    <property type="entry name" value="PRENYLTRANSFERASE ASQH1-RELATED"/>
    <property type="match status" value="1"/>
</dbReference>
<dbReference type="Pfam" id="PF11991">
    <property type="entry name" value="Trp_DMAT"/>
    <property type="match status" value="1"/>
</dbReference>
<dbReference type="SFLD" id="SFLDS00036">
    <property type="entry name" value="Aromatic_Prenyltransferase"/>
    <property type="match status" value="1"/>
</dbReference>
<name>NSCD_ARTGP</name>
<gene>
    <name evidence="4" type="primary">nscD</name>
    <name type="ORF">MGYG_06589</name>
</gene>
<evidence type="ECO:0000250" key="1">
    <source>
        <dbReference type="UniProtKB" id="A1D8I8"/>
    </source>
</evidence>
<evidence type="ECO:0000250" key="2">
    <source>
        <dbReference type="UniProtKB" id="F2S700"/>
    </source>
</evidence>
<evidence type="ECO:0000269" key="3">
    <source>
    </source>
</evidence>
<evidence type="ECO:0000303" key="4">
    <source>
    </source>
</evidence>
<evidence type="ECO:0000305" key="5"/>
<evidence type="ECO:0000305" key="6">
    <source>
    </source>
</evidence>
<reference key="1">
    <citation type="journal article" date="2012" name="MBio">
        <title>Comparative genome analysis of Trichophyton rubrum and related dermatophytes reveals candidate genes involved in infection.</title>
        <authorList>
            <person name="Martinez D.A."/>
            <person name="Oliver B.G."/>
            <person name="Graeser Y."/>
            <person name="Goldberg J.M."/>
            <person name="Li W."/>
            <person name="Martinez-Rossi N.M."/>
            <person name="Monod M."/>
            <person name="Shelest E."/>
            <person name="Barton R.C."/>
            <person name="Birch E."/>
            <person name="Brakhage A.A."/>
            <person name="Chen Z."/>
            <person name="Gurr S.J."/>
            <person name="Heiman D."/>
            <person name="Heitman J."/>
            <person name="Kosti I."/>
            <person name="Rossi A."/>
            <person name="Saif S."/>
            <person name="Samalova M."/>
            <person name="Saunders C.W."/>
            <person name="Shea T."/>
            <person name="Summerbell R.C."/>
            <person name="Xu J."/>
            <person name="Young S."/>
            <person name="Zeng Q."/>
            <person name="Birren B.W."/>
            <person name="Cuomo C.A."/>
            <person name="White T.C."/>
        </authorList>
    </citation>
    <scope>NUCLEOTIDE SEQUENCE [LARGE SCALE GENOMIC DNA]</scope>
    <source>
        <strain>ATCC MYA-4604 / CBS 118893</strain>
    </source>
</reference>
<reference key="2">
    <citation type="journal article" date="2013" name="ACS Synth. Biol.">
        <title>Discovery of cryptic polyketide metabolites from dermatophytes using heterologous expression in Aspergillus nidulans.</title>
        <authorList>
            <person name="Yin W.B."/>
            <person name="Chooi Y.H."/>
            <person name="Smith A.R."/>
            <person name="Cacho R.A."/>
            <person name="Hu Y."/>
            <person name="White T.C."/>
            <person name="Tang Y."/>
        </authorList>
    </citation>
    <scope>FUNCTION</scope>
</reference>
<sequence>MASLPIFDSVSRFLPLTNEDEQFWWRLTGQHMARMMHEAGYPEDRQVECLLFHRFKVVPCLGPRPHSDIPWYKSRVGGGAADGCPINYSWRFGTADRKPHIRNFIEPLGTLTNTPADRLNEVATKALLQDYAMTLPNVDLELFWTFAPHYRPRIIEKADMEKLAGASLLVGAEMSPDSRTIDIKAYMYPRVPSQTSQLLTTILPQAMRDAYGEDVCLDSLNLVRDFMTSDPQGSQLTLTGTTGIDCCKLQDTRVKIYVITRNTSFDHISAIMTLGGRRPISKELLSQLQTLWYELKGAPAELPSSEQLPAQTKPDGSKNPIVVPFYFDIQPRLALPDVKAYIDVSTSPVSDLAAAKAVVRHLEHHGSGQNPQAYLNVLQDITPVEELETQKGALAFYSVAVKKNELDITSYFNPQVYKRYFAHEVQLNGQRRSAFE</sequence>
<comment type="function">
    <text evidence="1 2 3">Prenyltransferase; part of the gene cluster that mediates the biosynthesis of neosartoricin B, a prenylated anthracenone that probably exhibits T-cell antiproliferative activity, suggestive of a physiological role as an immunosuppressive agent (PubMed:23758576). The non-reducing polyketide synthase nscA probably synthesizes and cyclizes the decaketide backbone (By similarity). The hydrolase nscB then mediates the product release through hydrolysis followed by spontaneous decarboxylation (By similarity). The prenyltransferase nscD catalyzes the addition of the dimethylallyl group to the aromatic C5 (By similarity). The FAD-dependent monooxygenase nscC is then responsible for the stereospecific hydroxylation at C2 (By similarity). Neosartoricin B can be converted into two additional compounds neosartoricins C and D (By similarity). Neosartoricin C is a spirocyclic compound that is cyclized through the attack of C3 hydroxyl on C14, followed by dehydration (By similarity). On the other hand, neosartoricin D is a further cyclized compound in which attack of C2 on C14 in neosartoricin C results in the formation of the acetal-containing dioxabicyclo-octanone ring (By similarity). Both of these compounds are novel and possibly represent related metabolites of the gene cluster (By similarity).</text>
</comment>
<comment type="pathway">
    <text evidence="6">Secondary metabolite biosynthesis.</text>
</comment>
<comment type="similarity">
    <text evidence="5">Belongs to the tryptophan dimethylallyltransferase family.</text>
</comment>
<protein>
    <recommendedName>
        <fullName evidence="4">Prenyltransferase nscD</fullName>
        <ecNumber evidence="6">2.5.1.-</ecNumber>
    </recommendedName>
    <alternativeName>
        <fullName evidence="4">Neosartoricin B biosynthesis protein D</fullName>
    </alternativeName>
</protein>
<organism>
    <name type="scientific">Arthroderma gypseum (strain ATCC MYA-4604 / CBS 118893)</name>
    <name type="common">Microsporum gypseum</name>
    <dbReference type="NCBI Taxonomy" id="535722"/>
    <lineage>
        <taxon>Eukaryota</taxon>
        <taxon>Fungi</taxon>
        <taxon>Dikarya</taxon>
        <taxon>Ascomycota</taxon>
        <taxon>Pezizomycotina</taxon>
        <taxon>Eurotiomycetes</taxon>
        <taxon>Eurotiomycetidae</taxon>
        <taxon>Onygenales</taxon>
        <taxon>Arthrodermataceae</taxon>
        <taxon>Nannizzia</taxon>
    </lineage>
</organism>
<proteinExistence type="inferred from homology"/>
<accession>E4V2N3</accession>
<feature type="chain" id="PRO_0000437921" description="Prenyltransferase nscD">
    <location>
        <begin position="1"/>
        <end position="436"/>
    </location>
</feature>